<evidence type="ECO:0000269" key="1">
    <source>
    </source>
</evidence>
<evidence type="ECO:0000269" key="2">
    <source>
    </source>
</evidence>
<evidence type="ECO:0000269" key="3">
    <source>
    </source>
</evidence>
<evidence type="ECO:0000303" key="4">
    <source>
    </source>
</evidence>
<evidence type="ECO:0000303" key="5">
    <source>
    </source>
</evidence>
<evidence type="ECO:0000303" key="6">
    <source>
    </source>
</evidence>
<evidence type="ECO:0000305" key="7"/>
<evidence type="ECO:0000312" key="8">
    <source>
        <dbReference type="EMBL" id="AAF09602.1"/>
    </source>
</evidence>
<evidence type="ECO:0000312" key="9">
    <source>
        <dbReference type="EMBL" id="ANC70345.1"/>
    </source>
</evidence>
<evidence type="ECO:0007829" key="10">
    <source>
        <dbReference type="PDB" id="7UDI"/>
    </source>
</evidence>
<proteinExistence type="evidence at protein level"/>
<dbReference type="EMBL" id="AE000513">
    <property type="protein sequence ID" value="AAF09602.1"/>
    <property type="status" value="ALT_SEQ"/>
    <property type="molecule type" value="Genomic_DNA"/>
</dbReference>
<dbReference type="EMBL" id="CP015081">
    <property type="protein sequence ID" value="ANC70345.1"/>
    <property type="molecule type" value="Genomic_DNA"/>
</dbReference>
<dbReference type="RefSeq" id="NP_293729.1">
    <property type="nucleotide sequence ID" value="NC_001263.1"/>
</dbReference>
<dbReference type="RefSeq" id="WP_027480257.1">
    <property type="nucleotide sequence ID" value="NC_001263.1"/>
</dbReference>
<dbReference type="PDB" id="7QVB">
    <property type="method" value="X-ray"/>
    <property type="resolution" value="2.50 A"/>
    <property type="chains" value="A/B=4-231"/>
</dbReference>
<dbReference type="PDB" id="7UDI">
    <property type="method" value="X-ray"/>
    <property type="resolution" value="2.24 A"/>
    <property type="chains" value="A/B=1-231"/>
</dbReference>
<dbReference type="PDB" id="8U0G">
    <property type="method" value="X-ray"/>
    <property type="resolution" value="4.28 A"/>
    <property type="chains" value="A/B=1-231"/>
</dbReference>
<dbReference type="PDB" id="8U1J">
    <property type="method" value="X-ray"/>
    <property type="resolution" value="3.00 A"/>
    <property type="chains" value="A=1-98"/>
</dbReference>
<dbReference type="PDBsum" id="7QVB"/>
<dbReference type="PDBsum" id="7UDI"/>
<dbReference type="PDBsum" id="8U0G"/>
<dbReference type="PDBsum" id="8U1J"/>
<dbReference type="SMR" id="Q9RYE6"/>
<dbReference type="STRING" id="243230.DR_0003"/>
<dbReference type="PaxDb" id="243230-DR_0003"/>
<dbReference type="EnsemblBacteria" id="AAF09602">
    <property type="protein sequence ID" value="AAF09602"/>
    <property type="gene ID" value="DR_0003"/>
</dbReference>
<dbReference type="GeneID" id="69516230"/>
<dbReference type="KEGG" id="dra:DR_0003"/>
<dbReference type="HOGENOM" id="CLU_955529_0_0_0"/>
<dbReference type="InParanoid" id="Q9RYE6"/>
<dbReference type="Proteomes" id="UP000002524">
    <property type="component" value="Chromosome 1"/>
</dbReference>
<dbReference type="GO" id="GO:0005737">
    <property type="term" value="C:cytoplasm"/>
    <property type="evidence" value="ECO:0007669"/>
    <property type="project" value="UniProtKB-KW"/>
</dbReference>
<dbReference type="GO" id="GO:0009295">
    <property type="term" value="C:nucleoid"/>
    <property type="evidence" value="ECO:0007669"/>
    <property type="project" value="UniProtKB-SubCell"/>
</dbReference>
<dbReference type="GO" id="GO:0071465">
    <property type="term" value="P:cellular response to desiccation"/>
    <property type="evidence" value="ECO:0000270"/>
    <property type="project" value="UniProtKB"/>
</dbReference>
<dbReference type="GO" id="GO:0071480">
    <property type="term" value="P:cellular response to gamma radiation"/>
    <property type="evidence" value="ECO:0000270"/>
    <property type="project" value="UniProtKB"/>
</dbReference>
<dbReference type="GO" id="GO:0006974">
    <property type="term" value="P:DNA damage response"/>
    <property type="evidence" value="ECO:0000270"/>
    <property type="project" value="UniProtKB"/>
</dbReference>
<dbReference type="GO" id="GO:0006281">
    <property type="term" value="P:DNA repair"/>
    <property type="evidence" value="ECO:0007669"/>
    <property type="project" value="UniProtKB-KW"/>
</dbReference>
<dbReference type="NCBIfam" id="NF033622">
    <property type="entry name" value="repair_DdrC"/>
    <property type="match status" value="1"/>
</dbReference>
<comment type="function">
    <text evidence="1 2 3">Appears to contribute to D.radiodurans capacity to survive exposure to ionizing radiation (PubMed:15454524). Likely functions as a DNA damage-induced nucleoid-associated protein (NAP) that contributes to the enhanced level of nucleoid compaction after irradiation by bridging DNA duplexes, thereby limiting the dispersion of the fragmented genome immediately after irradiation to facilitate subsequent DNA repair. In vitro, binds both ssDNA and dsDNA, and is able to compact circular DNA, circularize linear DNA, anneal complementary DNA strands and protect DNA from nucleases (PubMed:28542368, PubMed:35801857).</text>
</comment>
<comment type="subunit">
    <text evidence="3">Homodimer.</text>
</comment>
<comment type="subcellular location">
    <subcellularLocation>
        <location>Cytoplasm</location>
        <location>Nucleoid</location>
    </subcellularLocation>
    <text evidence="2">Is distributed all over the nucleoid shortly after irradiation, but after 2-3 hours, it forms discrete foci located at the sites of septal closure in between the newly segregated chromosomes of D.radiodurans.</text>
</comment>
<comment type="induction">
    <text evidence="1 2">Induced to high levels following extreme ionizing radiation exposure (PubMed:15454524, PubMed:28542368). Is induced after gamma-irradiation in an IrrE/DdrO dependent manner (PubMed:28542368). Also highly induced in response to desiccation stress (PubMed:15454524).</text>
</comment>
<comment type="domain">
    <text evidence="3">Is composed of two domains, an unusual N-terminal wHTH motif and a more classical four-helix bundle at its C-terminus, which is domain swapped in the DdrC homodimer. The domain swapping creates an asymmetric dimer exhibiting two distinct DNA binding surfaces corresponding to a high- and a low-affinity DNA binding site.</text>
</comment>
<comment type="disruption phenotype">
    <text evidence="1 2">Cells lacking this gene show a normal growth rate, do not exhibit a decrease in the efficiency of natural transformation, and is as resistant to ionizing radiation as wild-type. However, deletion of the ddrC gene decreases the ionizing radiation resistance of the ddrB mutant strain or the recA mutant strain, and appears to increase that of the pprA mutant strain. Moreover, cells lacking both ddrC and ddrD exhibit a slight (two-fold) increase in sensitivity to ionizing radiation, but this phenotype is apparent only at the highest applied doses (PubMed:15454524). The ddrC deletion mutant is 10 times more ssensitive to high doses of UV radiation than wild-type cells, and the ddrC deletion significantly increases UV-sensitivity of uvrA or uvsE deletion mutant strains (PubMed:28542368).</text>
</comment>
<comment type="sequence caution" evidence="7">
    <conflict type="miscellaneous discrepancy">
        <sequence resource="EMBL-CDS" id="AAF09602"/>
    </conflict>
    <text>Was originally predicted on the opposite strand.</text>
</comment>
<reference key="1">
    <citation type="journal article" date="1999" name="Science">
        <title>Genome sequence of the radioresistant bacterium Deinococcus radiodurans R1.</title>
        <authorList>
            <person name="White O."/>
            <person name="Eisen J.A."/>
            <person name="Heidelberg J.F."/>
            <person name="Hickey E.K."/>
            <person name="Peterson J.D."/>
            <person name="Dodson R.J."/>
            <person name="Haft D.H."/>
            <person name="Gwinn M.L."/>
            <person name="Nelson W.C."/>
            <person name="Richardson D.L."/>
            <person name="Moffat K.S."/>
            <person name="Qin H."/>
            <person name="Jiang L."/>
            <person name="Pamphile W."/>
            <person name="Crosby M."/>
            <person name="Shen M."/>
            <person name="Vamathevan J.J."/>
            <person name="Lam P."/>
            <person name="McDonald L.A."/>
            <person name="Utterback T.R."/>
            <person name="Zalewski C."/>
            <person name="Makarova K.S."/>
            <person name="Aravind L."/>
            <person name="Daly M.J."/>
            <person name="Minton K.W."/>
            <person name="Fleischmann R.D."/>
            <person name="Ketchum K.A."/>
            <person name="Nelson K.E."/>
            <person name="Salzberg S.L."/>
            <person name="Smith H.O."/>
            <person name="Venter J.C."/>
            <person name="Fraser C.M."/>
        </authorList>
    </citation>
    <scope>NUCLEOTIDE SEQUENCE [LARGE SCALE GENOMIC DNA]</scope>
    <source>
        <strain>ATCC 13939 / DSM 20539 / JCM 16871 / CCUG 27074 / LMG 4051 / NBRC 15346 / NCIMB 9279 / VKM B-1422 / R1</strain>
    </source>
</reference>
<reference key="2">
    <citation type="journal article" date="2016" name="Genome Announc.">
        <title>Improved Complete Genome Sequence of the Extremely Radioresistant Bacterium Deinococcus radiodurans R1 Obtained Using PacBio Single-Molecule Sequencing.</title>
        <authorList>
            <person name="Hua X."/>
            <person name="Hua Y."/>
        </authorList>
    </citation>
    <scope>NUCLEOTIDE SEQUENCE [LARGE SCALE GENOMIC DNA]</scope>
    <source>
        <strain>ATCC 13939 / DSM 20539 / JCM 16871 / CCUG 27074 / LMG 4051 / NBRC 15346 / NCIMB 9279 / VKM B-1422 / R1</strain>
    </source>
</reference>
<reference key="3">
    <citation type="journal article" date="2004" name="Genetics">
        <title>Analysis of Deinococcus radiodurans's transcriptional response to ionizing radiation and desiccation reveals novel proteins that contribute to extreme radioresistance.</title>
        <authorList>
            <person name="Tanaka M."/>
            <person name="Earl A.M."/>
            <person name="Howell H.A."/>
            <person name="Park M.J."/>
            <person name="Eisen J.A."/>
            <person name="Peterson S.N."/>
            <person name="Battista J.R."/>
        </authorList>
    </citation>
    <scope>FUNCTION</scope>
    <scope>INDUCTION</scope>
    <scope>ROLE IN RADIORESISTANCE</scope>
    <scope>DISRUPTION PHENOTYPE</scope>
    <source>
        <strain>ATCC 13939 / DSM 20539 / JCM 16871 / CCUG 27074 / LMG 4051 / NBRC 15346 / NCIMB 9279 / VKM B-1422 / R1</strain>
    </source>
</reference>
<reference key="4">
    <citation type="journal article" date="2017" name="PLoS ONE">
        <title>In vivo and in vitro characterization of DdrC, a DNA damage response protein in Deinococcus radiodurans bacterium.</title>
        <authorList>
            <person name="Bouthier de la Tour C."/>
            <person name="Mathieu M."/>
            <person name="Meyer L."/>
            <person name="Dupaigne P."/>
            <person name="Passot F."/>
            <person name="Servant P."/>
            <person name="Sommer S."/>
            <person name="Le Cam E."/>
            <person name="Confalonieri F."/>
        </authorList>
    </citation>
    <scope>FUNCTION</scope>
    <scope>DNA-BINDING</scope>
    <scope>SUBCELLULAR LOCATION</scope>
    <scope>INDUCTION</scope>
    <scope>DISRUPTION PHENOTYPE</scope>
    <source>
        <strain>ATCC 13939 / DSM 20539 / JCM 16871 / CCUG 27074 / LMG 4051 / NBRC 15346 / NCIMB 9279 / VKM B-1422 / R1</strain>
    </source>
</reference>
<reference key="5">
    <citation type="journal article" date="2022" name="Nucleic Acids Res.">
        <title>Structural and functional characterization of DdrC, a novel DNA damage-induced nucleoid associated protein involved in DNA compaction.</title>
        <authorList>
            <person name="Banneville A.S."/>
            <person name="Bouthier de la Tour C."/>
            <person name="De Bonis S."/>
            <person name="Hognon C."/>
            <person name="Colletier J.P."/>
            <person name="Teulon J.M."/>
            <person name="Le Roy A."/>
            <person name="Pellequer J.L."/>
            <person name="Monari A."/>
            <person name="Dehez F."/>
            <person name="Confalonieri F."/>
            <person name="Servant P."/>
            <person name="Timmins J."/>
        </authorList>
    </citation>
    <scope>X-RAY CRYSTALLOGRAPHY (2.5 ANGSTROMS)</scope>
    <scope>FUNCTION</scope>
    <scope>DNA-BINDING</scope>
    <scope>SUBUNIT</scope>
    <scope>DOMAIN</scope>
    <scope>MUTAGENESIS OF ARG-14; ARG-81; ARG-142; LYS-158; ARG-164 AND ARG-167</scope>
    <source>
        <strain>ATCC 13939 / DSM 20539 / JCM 16871 / CCUG 27074 / LMG 4051 / NBRC 15346 / NCIMB 9279 / VKM B-1422 / R1</strain>
    </source>
</reference>
<accession>Q9RYE6</accession>
<gene>
    <name evidence="4 5 6" type="primary">ddrC</name>
    <name evidence="8" type="ordered locus">DR_0003</name>
    <name evidence="9" type="ORF">A2G07_00380</name>
</gene>
<protein>
    <recommendedName>
        <fullName evidence="4">DNA damage response protein C</fullName>
    </recommendedName>
</protein>
<organism>
    <name type="scientific">Deinococcus radiodurans (strain ATCC 13939 / DSM 20539 / JCM 16871 / CCUG 27074 / LMG 4051 / NBRC 15346 / NCIMB 9279 / VKM B-1422 / R1)</name>
    <dbReference type="NCBI Taxonomy" id="243230"/>
    <lineage>
        <taxon>Bacteria</taxon>
        <taxon>Thermotogati</taxon>
        <taxon>Deinococcota</taxon>
        <taxon>Deinococci</taxon>
        <taxon>Deinococcales</taxon>
        <taxon>Deinococcaceae</taxon>
        <taxon>Deinococcus</taxon>
    </lineage>
</organism>
<name>DDRC_DEIRA</name>
<keyword id="KW-0002">3D-structure</keyword>
<keyword id="KW-0963">Cytoplasm</keyword>
<keyword id="KW-0227">DNA damage</keyword>
<keyword id="KW-0234">DNA repair</keyword>
<keyword id="KW-1185">Reference proteome</keyword>
<keyword id="KW-0346">Stress response</keyword>
<feature type="chain" id="PRO_0000394493" description="DNA damage response protein C">
    <location>
        <begin position="1"/>
        <end position="231"/>
    </location>
</feature>
<feature type="mutagenesis site" description="Exhibits only one DNA binding site, no longer retaining the low-affinity site, and shows reduced binding to the high-affinity site." evidence="3">
    <original>R</original>
    <variation>E</variation>
    <location>
        <position position="14"/>
    </location>
</feature>
<feature type="mutagenesis site" description="Retains two distinct DNA binding sites similar to wild-type DdrC, with a high- and a low-affinity site, but shows a reduced high-affinity DNA binding site." evidence="3">
    <original>R</original>
    <variation>E</variation>
    <location>
        <position position="81"/>
    </location>
</feature>
<feature type="mutagenesis site" description="Retains two distinct DNA binding sites similar to wild-type DdrC, with a high- and a low-affinity site, but shows a reduced high-affinity DNA binding site." evidence="3">
    <original>R</original>
    <variation>E</variation>
    <location>
        <position position="142"/>
    </location>
</feature>
<feature type="mutagenesis site" description="Exhibits only one DNA binding site, no longer retaining the high-affinity site, and shows highly reduced binding to the low-affinity site." evidence="3">
    <original>K</original>
    <variation>E</variation>
    <location>
        <position position="158"/>
    </location>
</feature>
<feature type="mutagenesis site" description="Exhibits only one DNA binding site, no longer retaining the high-affinity site, and shows highly reduced binding to the low-affinity site." evidence="3">
    <original>R</original>
    <variation>E</variation>
    <location>
        <position position="164"/>
    </location>
</feature>
<feature type="mutagenesis site" description="Exhibits only one DNA binding site, no longer retaining the high-affinity site, and shows highly reduced binding to the low-affinity site." evidence="3">
    <original>R</original>
    <variation>E</variation>
    <location>
        <position position="167"/>
    </location>
</feature>
<feature type="strand" evidence="10">
    <location>
        <begin position="6"/>
        <end position="10"/>
    </location>
</feature>
<feature type="strand" evidence="10">
    <location>
        <begin position="13"/>
        <end position="17"/>
    </location>
</feature>
<feature type="strand" evidence="10">
    <location>
        <begin position="21"/>
        <end position="24"/>
    </location>
</feature>
<feature type="helix" evidence="10">
    <location>
        <begin position="25"/>
        <end position="32"/>
    </location>
</feature>
<feature type="helix" evidence="10">
    <location>
        <begin position="38"/>
        <end position="45"/>
    </location>
</feature>
<feature type="strand" evidence="10">
    <location>
        <begin position="50"/>
        <end position="63"/>
    </location>
</feature>
<feature type="helix" evidence="10">
    <location>
        <begin position="64"/>
        <end position="73"/>
    </location>
</feature>
<feature type="helix" evidence="10">
    <location>
        <begin position="77"/>
        <end position="94"/>
    </location>
</feature>
<feature type="helix" evidence="10">
    <location>
        <begin position="98"/>
        <end position="106"/>
    </location>
</feature>
<feature type="helix" evidence="10">
    <location>
        <begin position="111"/>
        <end position="118"/>
    </location>
</feature>
<feature type="helix" evidence="10">
    <location>
        <begin position="126"/>
        <end position="136"/>
    </location>
</feature>
<feature type="helix" evidence="10">
    <location>
        <begin position="143"/>
        <end position="155"/>
    </location>
</feature>
<feature type="helix" evidence="10">
    <location>
        <begin position="160"/>
        <end position="166"/>
    </location>
</feature>
<feature type="helix" evidence="10">
    <location>
        <begin position="178"/>
        <end position="197"/>
    </location>
</feature>
<feature type="helix" evidence="10">
    <location>
        <begin position="202"/>
        <end position="225"/>
    </location>
</feature>
<sequence>MKNAPLTLNFGSVRLPVSADGLLHAPTAQQQLGLTQSWEAALVEHGLPETYRDFGAGPEAAVSVPDFVALAFALDTPEARRWQKRARELLARAMQGDVRVAAQIAERNPEPDARRWLAARLESTGARRELLATVARHGGEGRVYGQLGSISNRTVLGKDSASVRQERGVKATRDGLTSAELLRLAYIDTVTARAIQESEARGNAAILTLHEQVARSERQSWERAGQVQRVG</sequence>